<feature type="chain" id="PRO_0000182832" description="Deoxyuridine 5'-triphosphate nucleotidohydrolase">
    <location>
        <begin position="1"/>
        <end position="149"/>
    </location>
</feature>
<feature type="binding site" evidence="1">
    <location>
        <begin position="68"/>
        <end position="70"/>
    </location>
    <ligand>
        <name>substrate</name>
    </ligand>
</feature>
<feature type="binding site" evidence="1">
    <location>
        <position position="81"/>
    </location>
    <ligand>
        <name>substrate</name>
    </ligand>
</feature>
<feature type="binding site" evidence="1">
    <location>
        <begin position="85"/>
        <end position="87"/>
    </location>
    <ligand>
        <name>substrate</name>
    </ligand>
</feature>
<feature type="binding site" evidence="1">
    <location>
        <position position="95"/>
    </location>
    <ligand>
        <name>substrate</name>
    </ligand>
</feature>
<evidence type="ECO:0000255" key="1">
    <source>
        <dbReference type="HAMAP-Rule" id="MF_00116"/>
    </source>
</evidence>
<proteinExistence type="inferred from homology"/>
<reference key="1">
    <citation type="journal article" date="2003" name="Nat. Genet.">
        <title>Comparative analysis of the genome sequences of Bordetella pertussis, Bordetella parapertussis and Bordetella bronchiseptica.</title>
        <authorList>
            <person name="Parkhill J."/>
            <person name="Sebaihia M."/>
            <person name="Preston A."/>
            <person name="Murphy L.D."/>
            <person name="Thomson N.R."/>
            <person name="Harris D.E."/>
            <person name="Holden M.T.G."/>
            <person name="Churcher C.M."/>
            <person name="Bentley S.D."/>
            <person name="Mungall K.L."/>
            <person name="Cerdeno-Tarraga A.-M."/>
            <person name="Temple L."/>
            <person name="James K.D."/>
            <person name="Harris B."/>
            <person name="Quail M.A."/>
            <person name="Achtman M."/>
            <person name="Atkin R."/>
            <person name="Baker S."/>
            <person name="Basham D."/>
            <person name="Bason N."/>
            <person name="Cherevach I."/>
            <person name="Chillingworth T."/>
            <person name="Collins M."/>
            <person name="Cronin A."/>
            <person name="Davis P."/>
            <person name="Doggett J."/>
            <person name="Feltwell T."/>
            <person name="Goble A."/>
            <person name="Hamlin N."/>
            <person name="Hauser H."/>
            <person name="Holroyd S."/>
            <person name="Jagels K."/>
            <person name="Leather S."/>
            <person name="Moule S."/>
            <person name="Norberczak H."/>
            <person name="O'Neil S."/>
            <person name="Ormond D."/>
            <person name="Price C."/>
            <person name="Rabbinowitsch E."/>
            <person name="Rutter S."/>
            <person name="Sanders M."/>
            <person name="Saunders D."/>
            <person name="Seeger K."/>
            <person name="Sharp S."/>
            <person name="Simmonds M."/>
            <person name="Skelton J."/>
            <person name="Squares R."/>
            <person name="Squares S."/>
            <person name="Stevens K."/>
            <person name="Unwin L."/>
            <person name="Whitehead S."/>
            <person name="Barrell B.G."/>
            <person name="Maskell D.J."/>
        </authorList>
    </citation>
    <scope>NUCLEOTIDE SEQUENCE [LARGE SCALE GENOMIC DNA]</scope>
    <source>
        <strain>12822 / ATCC BAA-587 / NCTC 13253</strain>
    </source>
</reference>
<protein>
    <recommendedName>
        <fullName evidence="1">Deoxyuridine 5'-triphosphate nucleotidohydrolase</fullName>
        <shortName evidence="1">dUTPase</shortName>
        <ecNumber evidence="1">3.6.1.23</ecNumber>
    </recommendedName>
    <alternativeName>
        <fullName evidence="1">dUTP pyrophosphatase</fullName>
    </alternativeName>
</protein>
<accession>Q7W8Z8</accession>
<dbReference type="EC" id="3.6.1.23" evidence="1"/>
<dbReference type="EMBL" id="BX640429">
    <property type="protein sequence ID" value="CAE37276.1"/>
    <property type="molecule type" value="Genomic_DNA"/>
</dbReference>
<dbReference type="RefSeq" id="WP_003812576.1">
    <property type="nucleotide sequence ID" value="NC_002928.3"/>
</dbReference>
<dbReference type="SMR" id="Q7W8Z8"/>
<dbReference type="GeneID" id="93203748"/>
<dbReference type="KEGG" id="bpa:BPP1976"/>
<dbReference type="HOGENOM" id="CLU_068508_1_1_4"/>
<dbReference type="UniPathway" id="UPA00610">
    <property type="reaction ID" value="UER00666"/>
</dbReference>
<dbReference type="Proteomes" id="UP000001421">
    <property type="component" value="Chromosome"/>
</dbReference>
<dbReference type="GO" id="GO:0004170">
    <property type="term" value="F:dUTP diphosphatase activity"/>
    <property type="evidence" value="ECO:0007669"/>
    <property type="project" value="UniProtKB-UniRule"/>
</dbReference>
<dbReference type="GO" id="GO:0000287">
    <property type="term" value="F:magnesium ion binding"/>
    <property type="evidence" value="ECO:0007669"/>
    <property type="project" value="UniProtKB-UniRule"/>
</dbReference>
<dbReference type="GO" id="GO:0006226">
    <property type="term" value="P:dUMP biosynthetic process"/>
    <property type="evidence" value="ECO:0007669"/>
    <property type="project" value="UniProtKB-UniRule"/>
</dbReference>
<dbReference type="GO" id="GO:0046081">
    <property type="term" value="P:dUTP catabolic process"/>
    <property type="evidence" value="ECO:0007669"/>
    <property type="project" value="InterPro"/>
</dbReference>
<dbReference type="CDD" id="cd07557">
    <property type="entry name" value="trimeric_dUTPase"/>
    <property type="match status" value="1"/>
</dbReference>
<dbReference type="FunFam" id="2.70.40.10:FF:000002">
    <property type="entry name" value="dUTP diphosphatase"/>
    <property type="match status" value="1"/>
</dbReference>
<dbReference type="Gene3D" id="2.70.40.10">
    <property type="match status" value="1"/>
</dbReference>
<dbReference type="HAMAP" id="MF_00116">
    <property type="entry name" value="dUTPase_bact"/>
    <property type="match status" value="1"/>
</dbReference>
<dbReference type="InterPro" id="IPR008181">
    <property type="entry name" value="dUTPase"/>
</dbReference>
<dbReference type="InterPro" id="IPR029054">
    <property type="entry name" value="dUTPase-like"/>
</dbReference>
<dbReference type="InterPro" id="IPR036157">
    <property type="entry name" value="dUTPase-like_sf"/>
</dbReference>
<dbReference type="InterPro" id="IPR033704">
    <property type="entry name" value="dUTPase_trimeric"/>
</dbReference>
<dbReference type="NCBIfam" id="TIGR00576">
    <property type="entry name" value="dut"/>
    <property type="match status" value="1"/>
</dbReference>
<dbReference type="NCBIfam" id="NF001862">
    <property type="entry name" value="PRK00601.1"/>
    <property type="match status" value="1"/>
</dbReference>
<dbReference type="PANTHER" id="PTHR11241">
    <property type="entry name" value="DEOXYURIDINE 5'-TRIPHOSPHATE NUCLEOTIDOHYDROLASE"/>
    <property type="match status" value="1"/>
</dbReference>
<dbReference type="PANTHER" id="PTHR11241:SF0">
    <property type="entry name" value="DEOXYURIDINE 5'-TRIPHOSPHATE NUCLEOTIDOHYDROLASE"/>
    <property type="match status" value="1"/>
</dbReference>
<dbReference type="Pfam" id="PF00692">
    <property type="entry name" value="dUTPase"/>
    <property type="match status" value="1"/>
</dbReference>
<dbReference type="SUPFAM" id="SSF51283">
    <property type="entry name" value="dUTPase-like"/>
    <property type="match status" value="1"/>
</dbReference>
<keyword id="KW-0378">Hydrolase</keyword>
<keyword id="KW-0460">Magnesium</keyword>
<keyword id="KW-0479">Metal-binding</keyword>
<keyword id="KW-0546">Nucleotide metabolism</keyword>
<gene>
    <name evidence="1" type="primary">dut</name>
    <name type="ordered locus">BPP1976</name>
</gene>
<organism>
    <name type="scientific">Bordetella parapertussis (strain 12822 / ATCC BAA-587 / NCTC 13253)</name>
    <dbReference type="NCBI Taxonomy" id="257311"/>
    <lineage>
        <taxon>Bacteria</taxon>
        <taxon>Pseudomonadati</taxon>
        <taxon>Pseudomonadota</taxon>
        <taxon>Betaproteobacteria</taxon>
        <taxon>Burkholderiales</taxon>
        <taxon>Alcaligenaceae</taxon>
        <taxon>Bordetella</taxon>
    </lineage>
</organism>
<comment type="function">
    <text evidence="1">This enzyme is involved in nucleotide metabolism: it produces dUMP, the immediate precursor of thymidine nucleotides and it decreases the intracellular concentration of dUTP so that uracil cannot be incorporated into DNA.</text>
</comment>
<comment type="catalytic activity">
    <reaction evidence="1">
        <text>dUTP + H2O = dUMP + diphosphate + H(+)</text>
        <dbReference type="Rhea" id="RHEA:10248"/>
        <dbReference type="ChEBI" id="CHEBI:15377"/>
        <dbReference type="ChEBI" id="CHEBI:15378"/>
        <dbReference type="ChEBI" id="CHEBI:33019"/>
        <dbReference type="ChEBI" id="CHEBI:61555"/>
        <dbReference type="ChEBI" id="CHEBI:246422"/>
        <dbReference type="EC" id="3.6.1.23"/>
    </reaction>
</comment>
<comment type="cofactor">
    <cofactor evidence="1">
        <name>Mg(2+)</name>
        <dbReference type="ChEBI" id="CHEBI:18420"/>
    </cofactor>
</comment>
<comment type="pathway">
    <text evidence="1">Pyrimidine metabolism; dUMP biosynthesis; dUMP from dCTP (dUTP route): step 2/2.</text>
</comment>
<comment type="similarity">
    <text evidence="1">Belongs to the dUTPase family.</text>
</comment>
<name>DUT_BORPA</name>
<sequence>MKSVDLKILDARMREYLPAYATPGSAGLDLRACTEASLVIEPGQTVLVPTGLAIHIGDPRYAAMILPRSGLGHKHGIVLGNLVGLIDSDYQGQLMVSTWNRGTQPFTLDPMERLAQLVIVPVQQVAFNVVEDFDASERGAGGFGSTGRA</sequence>